<organism>
    <name type="scientific">Bacillus subtilis (strain 168)</name>
    <dbReference type="NCBI Taxonomy" id="224308"/>
    <lineage>
        <taxon>Bacteria</taxon>
        <taxon>Bacillati</taxon>
        <taxon>Bacillota</taxon>
        <taxon>Bacilli</taxon>
        <taxon>Bacillales</taxon>
        <taxon>Bacillaceae</taxon>
        <taxon>Bacillus</taxon>
    </lineage>
</organism>
<sequence length="273" mass="29097">MSFVILVVLGLIAGTVGSLIGLGGGIVIVPSLMFLSTVTQLFQDVTPQVAIGTSLLVIIFTGLSSTLAYIKYKTVDYKSGLIFFIGSGPGSMIGAYVSKLFNSNSFSVWFGIFMILISLSLMLKAKARPINKAHKGIIRTFQDDAGEPYTYSYQASVGIAIAFVVGFLGGLFGIGGGSLMVPAMMLLFLFPPKVAVATSMFIIFLSSMTGSVSHMISGHVNWLYALALVPGAWFGGKLGAAINRKMQTKTIVMIMRIVLILIGCQLIYEGIFS</sequence>
<keyword id="KW-1003">Cell membrane</keyword>
<keyword id="KW-0472">Membrane</keyword>
<keyword id="KW-1185">Reference proteome</keyword>
<keyword id="KW-0812">Transmembrane</keyword>
<keyword id="KW-1133">Transmembrane helix</keyword>
<keyword id="KW-0813">Transport</keyword>
<gene>
    <name type="primary">yunE</name>
    <name type="ordered locus">BSU32380</name>
</gene>
<proteinExistence type="inferred from homology"/>
<reference key="1">
    <citation type="journal article" date="1997" name="Nature">
        <title>The complete genome sequence of the Gram-positive bacterium Bacillus subtilis.</title>
        <authorList>
            <person name="Kunst F."/>
            <person name="Ogasawara N."/>
            <person name="Moszer I."/>
            <person name="Albertini A.M."/>
            <person name="Alloni G."/>
            <person name="Azevedo V."/>
            <person name="Bertero M.G."/>
            <person name="Bessieres P."/>
            <person name="Bolotin A."/>
            <person name="Borchert S."/>
            <person name="Borriss R."/>
            <person name="Boursier L."/>
            <person name="Brans A."/>
            <person name="Braun M."/>
            <person name="Brignell S.C."/>
            <person name="Bron S."/>
            <person name="Brouillet S."/>
            <person name="Bruschi C.V."/>
            <person name="Caldwell B."/>
            <person name="Capuano V."/>
            <person name="Carter N.M."/>
            <person name="Choi S.-K."/>
            <person name="Codani J.-J."/>
            <person name="Connerton I.F."/>
            <person name="Cummings N.J."/>
            <person name="Daniel R.A."/>
            <person name="Denizot F."/>
            <person name="Devine K.M."/>
            <person name="Duesterhoeft A."/>
            <person name="Ehrlich S.D."/>
            <person name="Emmerson P.T."/>
            <person name="Entian K.-D."/>
            <person name="Errington J."/>
            <person name="Fabret C."/>
            <person name="Ferrari E."/>
            <person name="Foulger D."/>
            <person name="Fritz C."/>
            <person name="Fujita M."/>
            <person name="Fujita Y."/>
            <person name="Fuma S."/>
            <person name="Galizzi A."/>
            <person name="Galleron N."/>
            <person name="Ghim S.-Y."/>
            <person name="Glaser P."/>
            <person name="Goffeau A."/>
            <person name="Golightly E.J."/>
            <person name="Grandi G."/>
            <person name="Guiseppi G."/>
            <person name="Guy B.J."/>
            <person name="Haga K."/>
            <person name="Haiech J."/>
            <person name="Harwood C.R."/>
            <person name="Henaut A."/>
            <person name="Hilbert H."/>
            <person name="Holsappel S."/>
            <person name="Hosono S."/>
            <person name="Hullo M.-F."/>
            <person name="Itaya M."/>
            <person name="Jones L.-M."/>
            <person name="Joris B."/>
            <person name="Karamata D."/>
            <person name="Kasahara Y."/>
            <person name="Klaerr-Blanchard M."/>
            <person name="Klein C."/>
            <person name="Kobayashi Y."/>
            <person name="Koetter P."/>
            <person name="Koningstein G."/>
            <person name="Krogh S."/>
            <person name="Kumano M."/>
            <person name="Kurita K."/>
            <person name="Lapidus A."/>
            <person name="Lardinois S."/>
            <person name="Lauber J."/>
            <person name="Lazarevic V."/>
            <person name="Lee S.-M."/>
            <person name="Levine A."/>
            <person name="Liu H."/>
            <person name="Masuda S."/>
            <person name="Mauel C."/>
            <person name="Medigue C."/>
            <person name="Medina N."/>
            <person name="Mellado R.P."/>
            <person name="Mizuno M."/>
            <person name="Moestl D."/>
            <person name="Nakai S."/>
            <person name="Noback M."/>
            <person name="Noone D."/>
            <person name="O'Reilly M."/>
            <person name="Ogawa K."/>
            <person name="Ogiwara A."/>
            <person name="Oudega B."/>
            <person name="Park S.-H."/>
            <person name="Parro V."/>
            <person name="Pohl T.M."/>
            <person name="Portetelle D."/>
            <person name="Porwollik S."/>
            <person name="Prescott A.M."/>
            <person name="Presecan E."/>
            <person name="Pujic P."/>
            <person name="Purnelle B."/>
            <person name="Rapoport G."/>
            <person name="Rey M."/>
            <person name="Reynolds S."/>
            <person name="Rieger M."/>
            <person name="Rivolta C."/>
            <person name="Rocha E."/>
            <person name="Roche B."/>
            <person name="Rose M."/>
            <person name="Sadaie Y."/>
            <person name="Sato T."/>
            <person name="Scanlan E."/>
            <person name="Schleich S."/>
            <person name="Schroeter R."/>
            <person name="Scoffone F."/>
            <person name="Sekiguchi J."/>
            <person name="Sekowska A."/>
            <person name="Seror S.J."/>
            <person name="Serror P."/>
            <person name="Shin B.-S."/>
            <person name="Soldo B."/>
            <person name="Sorokin A."/>
            <person name="Tacconi E."/>
            <person name="Takagi T."/>
            <person name="Takahashi H."/>
            <person name="Takemaru K."/>
            <person name="Takeuchi M."/>
            <person name="Tamakoshi A."/>
            <person name="Tanaka T."/>
            <person name="Terpstra P."/>
            <person name="Tognoni A."/>
            <person name="Tosato V."/>
            <person name="Uchiyama S."/>
            <person name="Vandenbol M."/>
            <person name="Vannier F."/>
            <person name="Vassarotti A."/>
            <person name="Viari A."/>
            <person name="Wambutt R."/>
            <person name="Wedler E."/>
            <person name="Wedler H."/>
            <person name="Weitzenegger T."/>
            <person name="Winters P."/>
            <person name="Wipat A."/>
            <person name="Yamamoto H."/>
            <person name="Yamane K."/>
            <person name="Yasumoto K."/>
            <person name="Yata K."/>
            <person name="Yoshida K."/>
            <person name="Yoshikawa H.-F."/>
            <person name="Zumstein E."/>
            <person name="Yoshikawa H."/>
            <person name="Danchin A."/>
        </authorList>
    </citation>
    <scope>NUCLEOTIDE SEQUENCE [LARGE SCALE GENOMIC DNA]</scope>
    <source>
        <strain>168</strain>
    </source>
</reference>
<evidence type="ECO:0000255" key="1"/>
<evidence type="ECO:0000305" key="2"/>
<dbReference type="EMBL" id="AL009126">
    <property type="protein sequence ID" value="CAB15228.1"/>
    <property type="molecule type" value="Genomic_DNA"/>
</dbReference>
<dbReference type="PIR" id="H70015">
    <property type="entry name" value="H70015"/>
</dbReference>
<dbReference type="RefSeq" id="NP_391118.1">
    <property type="nucleotide sequence ID" value="NC_000964.3"/>
</dbReference>
<dbReference type="RefSeq" id="WP_003228670.1">
    <property type="nucleotide sequence ID" value="NZ_OZ025638.1"/>
</dbReference>
<dbReference type="FunCoup" id="O32134">
    <property type="interactions" value="290"/>
</dbReference>
<dbReference type="STRING" id="224308.BSU32380"/>
<dbReference type="PaxDb" id="224308-BSU32380"/>
<dbReference type="EnsemblBacteria" id="CAB15228">
    <property type="protein sequence ID" value="CAB15228"/>
    <property type="gene ID" value="BSU_32380"/>
</dbReference>
<dbReference type="GeneID" id="936506"/>
<dbReference type="KEGG" id="bsu:BSU32380"/>
<dbReference type="PATRIC" id="fig|224308.179.peg.3505"/>
<dbReference type="eggNOG" id="COG0730">
    <property type="taxonomic scope" value="Bacteria"/>
</dbReference>
<dbReference type="InParanoid" id="O32134"/>
<dbReference type="OrthoDB" id="9780109at2"/>
<dbReference type="PhylomeDB" id="O32134"/>
<dbReference type="BioCyc" id="BSUB:BSU32380-MONOMER"/>
<dbReference type="Proteomes" id="UP000001570">
    <property type="component" value="Chromosome"/>
</dbReference>
<dbReference type="GO" id="GO:0005886">
    <property type="term" value="C:plasma membrane"/>
    <property type="evidence" value="ECO:0007669"/>
    <property type="project" value="UniProtKB-SubCell"/>
</dbReference>
<dbReference type="InterPro" id="IPR002781">
    <property type="entry name" value="TM_pro_TauE-like"/>
</dbReference>
<dbReference type="InterPro" id="IPR051598">
    <property type="entry name" value="TSUP/Inactive_protease-like"/>
</dbReference>
<dbReference type="PANTHER" id="PTHR43701">
    <property type="entry name" value="MEMBRANE TRANSPORTER PROTEIN MJ0441-RELATED"/>
    <property type="match status" value="1"/>
</dbReference>
<dbReference type="PANTHER" id="PTHR43701:SF2">
    <property type="entry name" value="MEMBRANE TRANSPORTER PROTEIN YJNA-RELATED"/>
    <property type="match status" value="1"/>
</dbReference>
<dbReference type="Pfam" id="PF01925">
    <property type="entry name" value="TauE"/>
    <property type="match status" value="1"/>
</dbReference>
<feature type="chain" id="PRO_0000388995" description="Probable membrane transporter protein YunE">
    <location>
        <begin position="1"/>
        <end position="273"/>
    </location>
</feature>
<feature type="transmembrane region" description="Helical" evidence="1">
    <location>
        <begin position="3"/>
        <end position="23"/>
    </location>
</feature>
<feature type="transmembrane region" description="Helical" evidence="1">
    <location>
        <begin position="50"/>
        <end position="70"/>
    </location>
</feature>
<feature type="transmembrane region" description="Helical" evidence="1">
    <location>
        <begin position="81"/>
        <end position="101"/>
    </location>
</feature>
<feature type="transmembrane region" description="Helical" evidence="1">
    <location>
        <begin position="105"/>
        <end position="125"/>
    </location>
</feature>
<feature type="transmembrane region" description="Helical" evidence="1">
    <location>
        <begin position="157"/>
        <end position="177"/>
    </location>
</feature>
<feature type="transmembrane region" description="Helical" evidence="1">
    <location>
        <begin position="185"/>
        <end position="205"/>
    </location>
</feature>
<feature type="transmembrane region" description="Helical" evidence="1">
    <location>
        <begin position="222"/>
        <end position="242"/>
    </location>
</feature>
<feature type="transmembrane region" description="Helical" evidence="1">
    <location>
        <begin position="251"/>
        <end position="271"/>
    </location>
</feature>
<protein>
    <recommendedName>
        <fullName>Probable membrane transporter protein YunE</fullName>
    </recommendedName>
</protein>
<accession>O32134</accession>
<name>YUNE_BACSU</name>
<comment type="subcellular location">
    <subcellularLocation>
        <location evidence="2">Cell membrane</location>
        <topology evidence="2">Multi-pass membrane protein</topology>
    </subcellularLocation>
</comment>
<comment type="similarity">
    <text evidence="2">Belongs to the 4-toluene sulfonate uptake permease (TSUP) (TC 2.A.102) family.</text>
</comment>